<organismHost>
    <name type="scientific">Homo sapiens</name>
    <name type="common">Human</name>
    <dbReference type="NCBI Taxonomy" id="9606"/>
</organismHost>
<feature type="chain" id="PRO_0000133383" description="Protein E6">
    <location>
        <begin position="1"/>
        <end position="148"/>
    </location>
</feature>
<feature type="zinc finger region" evidence="1">
    <location>
        <begin position="29"/>
        <end position="65"/>
    </location>
</feature>
<feature type="zinc finger region" evidence="1">
    <location>
        <begin position="102"/>
        <end position="138"/>
    </location>
</feature>
<proteinExistence type="inferred from homology"/>
<protein>
    <recommendedName>
        <fullName evidence="1">Protein E6</fullName>
    </recommendedName>
</protein>
<evidence type="ECO:0000255" key="1">
    <source>
        <dbReference type="HAMAP-Rule" id="MF_04006"/>
    </source>
</evidence>
<evidence type="ECO:0000305" key="2"/>
<keyword id="KW-0010">Activator</keyword>
<keyword id="KW-0238">DNA-binding</keyword>
<keyword id="KW-0244">Early protein</keyword>
<keyword id="KW-1035">Host cytoplasm</keyword>
<keyword id="KW-1048">Host nucleus</keyword>
<keyword id="KW-0945">Host-virus interaction</keyword>
<keyword id="KW-1090">Inhibition of host innate immune response by virus</keyword>
<keyword id="KW-0479">Metal-binding</keyword>
<keyword id="KW-1119">Modulation of host cell apoptosis by virus</keyword>
<keyword id="KW-0804">Transcription</keyword>
<keyword id="KW-0805">Transcription regulation</keyword>
<keyword id="KW-0899">Viral immunoevasion</keyword>
<keyword id="KW-0862">Zinc</keyword>
<keyword id="KW-0863">Zinc-finger</keyword>
<sequence>MSMGAQEPRNIFLLCRNCGISFEDLRLCCVFCTKQLTVAELTAFALRELNLVWKAGVPYGACARCLLLQGIARRLKYWQYSYYVEGVEEETKESINTQQIRCYTCHKPLVKEEKDRHRNERRRLHKISGYWRGCCAYCWTRCTVRIPQ</sequence>
<organism>
    <name type="scientific">Human papillomavirus type 94</name>
    <dbReference type="NCBI Taxonomy" id="260717"/>
    <lineage>
        <taxon>Viruses</taxon>
        <taxon>Monodnaviria</taxon>
        <taxon>Shotokuvirae</taxon>
        <taxon>Cossaviricota</taxon>
        <taxon>Papovaviricetes</taxon>
        <taxon>Zurhausenvirales</taxon>
        <taxon>Papillomaviridae</taxon>
        <taxon>Firstpapillomavirinae</taxon>
        <taxon>Alphapapillomavirus</taxon>
        <taxon>Alphapapillomavirus 2</taxon>
    </lineage>
</organism>
<name>VE6_HPV94</name>
<reference key="1">
    <citation type="submission" date="2004-01" db="EMBL/GenBank/DDBJ databases">
        <title>Cloning and sequencing of full-length genome of HPV 94 (previously identified as PCR fragment DL40).</title>
        <authorList>
            <person name="de Villiers E.M."/>
            <person name="Rahn H."/>
            <person name="Hunziker A."/>
        </authorList>
    </citation>
    <scope>NUCLEOTIDE SEQUENCE [GENOMIC DNA]</scope>
</reference>
<dbReference type="EMBL" id="AJ620211">
    <property type="protein sequence ID" value="CAF05709.1"/>
    <property type="molecule type" value="Genomic_DNA"/>
</dbReference>
<dbReference type="SMR" id="Q705D2"/>
<dbReference type="Proteomes" id="UP000214780">
    <property type="component" value="Genome"/>
</dbReference>
<dbReference type="GO" id="GO:0030430">
    <property type="term" value="C:host cell cytoplasm"/>
    <property type="evidence" value="ECO:0007669"/>
    <property type="project" value="UniProtKB-SubCell"/>
</dbReference>
<dbReference type="GO" id="GO:0042025">
    <property type="term" value="C:host cell nucleus"/>
    <property type="evidence" value="ECO:0007669"/>
    <property type="project" value="UniProtKB-SubCell"/>
</dbReference>
<dbReference type="GO" id="GO:0003677">
    <property type="term" value="F:DNA binding"/>
    <property type="evidence" value="ECO:0007669"/>
    <property type="project" value="UniProtKB-UniRule"/>
</dbReference>
<dbReference type="GO" id="GO:0008270">
    <property type="term" value="F:zinc ion binding"/>
    <property type="evidence" value="ECO:0007669"/>
    <property type="project" value="UniProtKB-KW"/>
</dbReference>
<dbReference type="GO" id="GO:0006351">
    <property type="term" value="P:DNA-templated transcription"/>
    <property type="evidence" value="ECO:0007669"/>
    <property type="project" value="UniProtKB-UniRule"/>
</dbReference>
<dbReference type="GO" id="GO:0006355">
    <property type="term" value="P:regulation of DNA-templated transcription"/>
    <property type="evidence" value="ECO:0007669"/>
    <property type="project" value="UniProtKB-UniRule"/>
</dbReference>
<dbReference type="GO" id="GO:0052150">
    <property type="term" value="P:symbiont-mediated perturbation of host apoptosis"/>
    <property type="evidence" value="ECO:0007669"/>
    <property type="project" value="UniProtKB-KW"/>
</dbReference>
<dbReference type="GO" id="GO:0039648">
    <property type="term" value="P:symbiont-mediated perturbation of host ubiquitin-like protein modification"/>
    <property type="evidence" value="ECO:0007669"/>
    <property type="project" value="UniProtKB-UniRule"/>
</dbReference>
<dbReference type="GO" id="GO:0052170">
    <property type="term" value="P:symbiont-mediated suppression of host innate immune response"/>
    <property type="evidence" value="ECO:0007669"/>
    <property type="project" value="UniProtKB-KW"/>
</dbReference>
<dbReference type="GO" id="GO:0039502">
    <property type="term" value="P:symbiont-mediated suppression of host type I interferon-mediated signaling pathway"/>
    <property type="evidence" value="ECO:0007669"/>
    <property type="project" value="UniProtKB-UniRule"/>
</dbReference>
<dbReference type="Gene3D" id="3.30.240.40">
    <property type="entry name" value="E6 early regulatory protein"/>
    <property type="match status" value="2"/>
</dbReference>
<dbReference type="HAMAP" id="MF_04006">
    <property type="entry name" value="HPV_E6"/>
    <property type="match status" value="1"/>
</dbReference>
<dbReference type="InterPro" id="IPR001334">
    <property type="entry name" value="E6"/>
</dbReference>
<dbReference type="InterPro" id="IPR038575">
    <property type="entry name" value="E6_sf"/>
</dbReference>
<dbReference type="Pfam" id="PF00518">
    <property type="entry name" value="E6"/>
    <property type="match status" value="1"/>
</dbReference>
<dbReference type="SUPFAM" id="SSF161229">
    <property type="entry name" value="E6 C-terminal domain-like"/>
    <property type="match status" value="2"/>
</dbReference>
<gene>
    <name evidence="1" type="primary">E6</name>
</gene>
<comment type="function">
    <text evidence="1">Plays a major role in the induction and maintenance of cellular transformation. E6 associates with host UBE3A/E6-AP ubiquitin-protein ligase and modulates its activity. Sequesters tumor suppressor TP53 in the host cytoplasm and modulates its activity by interacting with host EP300 that results in the reduction of TP53 acetylation and activation. In turn, apoptosis induced by DNA damage is inhibited. E6 also protects host keratinocytes from apoptosis by mediating the degradation of host BAK1. May also inhibit host immune response.</text>
</comment>
<comment type="subunit">
    <text evidence="1">Forms homodimers. Interacts with ubiquitin-protein ligase UBE3A/E6-AP; this interaction stimulates UBE3A ubiquitin activity. Interacts with host TP53 and EP300; this interaction inhibits TP53 activity.</text>
</comment>
<comment type="subcellular location">
    <subcellularLocation>
        <location evidence="1">Host cytoplasm</location>
    </subcellularLocation>
    <subcellularLocation>
        <location evidence="1">Host nucleus</location>
    </subcellularLocation>
</comment>
<comment type="miscellaneous">
    <text evidence="1">Belongs to the low risk human alphapapillomavirus family. The cancer-causing human papillomavirus E6 protein has a unique carboxy terminal PDZ domain containing substrate but low risk E6s do not possess this domain.</text>
</comment>
<comment type="similarity">
    <text evidence="2">Belongs to the papillomaviridae E6 protein family.</text>
</comment>
<accession>Q705D2</accession>